<comment type="function">
    <text evidence="1">DNA-dependent RNA polymerase catalyzes the transcription of DNA into RNA using the four ribonucleoside triphosphates as substrates.</text>
</comment>
<comment type="catalytic activity">
    <reaction evidence="1">
        <text>RNA(n) + a ribonucleoside 5'-triphosphate = RNA(n+1) + diphosphate</text>
        <dbReference type="Rhea" id="RHEA:21248"/>
        <dbReference type="Rhea" id="RHEA-COMP:14527"/>
        <dbReference type="Rhea" id="RHEA-COMP:17342"/>
        <dbReference type="ChEBI" id="CHEBI:33019"/>
        <dbReference type="ChEBI" id="CHEBI:61557"/>
        <dbReference type="ChEBI" id="CHEBI:140395"/>
        <dbReference type="EC" id="2.7.7.6"/>
    </reaction>
</comment>
<comment type="subunit">
    <text evidence="1">The RNAP catalytic core consists of 2 alpha, 1 beta, 1 beta' and 1 omega subunit. When a sigma factor is associated with the core the holoenzyme is formed, which can initiate transcription.</text>
</comment>
<comment type="similarity">
    <text evidence="1">Belongs to the RNA polymerase beta chain family.</text>
</comment>
<feature type="chain" id="PRO_1000086385" description="DNA-directed RNA polymerase subunit beta">
    <location>
        <begin position="1"/>
        <end position="1183"/>
    </location>
</feature>
<dbReference type="EC" id="2.7.7.6" evidence="1"/>
<dbReference type="EMBL" id="CP000703">
    <property type="protein sequence ID" value="ABQ48369.1"/>
    <property type="molecule type" value="Genomic_DNA"/>
</dbReference>
<dbReference type="RefSeq" id="WP_000918675.1">
    <property type="nucleotide sequence ID" value="NC_009487.1"/>
</dbReference>
<dbReference type="SMR" id="A5IQ96"/>
<dbReference type="KEGG" id="saj:SaurJH9_0565"/>
<dbReference type="HOGENOM" id="CLU_000524_4_1_9"/>
<dbReference type="GO" id="GO:0000428">
    <property type="term" value="C:DNA-directed RNA polymerase complex"/>
    <property type="evidence" value="ECO:0007669"/>
    <property type="project" value="UniProtKB-KW"/>
</dbReference>
<dbReference type="GO" id="GO:0003677">
    <property type="term" value="F:DNA binding"/>
    <property type="evidence" value="ECO:0007669"/>
    <property type="project" value="UniProtKB-UniRule"/>
</dbReference>
<dbReference type="GO" id="GO:0003899">
    <property type="term" value="F:DNA-directed RNA polymerase activity"/>
    <property type="evidence" value="ECO:0007669"/>
    <property type="project" value="UniProtKB-UniRule"/>
</dbReference>
<dbReference type="GO" id="GO:0032549">
    <property type="term" value="F:ribonucleoside binding"/>
    <property type="evidence" value="ECO:0007669"/>
    <property type="project" value="InterPro"/>
</dbReference>
<dbReference type="GO" id="GO:0006351">
    <property type="term" value="P:DNA-templated transcription"/>
    <property type="evidence" value="ECO:0007669"/>
    <property type="project" value="UniProtKB-UniRule"/>
</dbReference>
<dbReference type="CDD" id="cd00653">
    <property type="entry name" value="RNA_pol_B_RPB2"/>
    <property type="match status" value="1"/>
</dbReference>
<dbReference type="FunFam" id="3.90.1800.10:FF:000001">
    <property type="entry name" value="DNA-directed RNA polymerase subunit beta"/>
    <property type="match status" value="1"/>
</dbReference>
<dbReference type="Gene3D" id="2.40.50.100">
    <property type="match status" value="1"/>
</dbReference>
<dbReference type="Gene3D" id="2.40.50.150">
    <property type="match status" value="1"/>
</dbReference>
<dbReference type="Gene3D" id="3.90.1100.10">
    <property type="match status" value="3"/>
</dbReference>
<dbReference type="Gene3D" id="2.40.270.10">
    <property type="entry name" value="DNA-directed RNA polymerase, subunit 2, domain 6"/>
    <property type="match status" value="1"/>
</dbReference>
<dbReference type="Gene3D" id="3.90.1800.10">
    <property type="entry name" value="RNA polymerase alpha subunit dimerisation domain"/>
    <property type="match status" value="1"/>
</dbReference>
<dbReference type="Gene3D" id="3.90.1110.10">
    <property type="entry name" value="RNA polymerase Rpb2, domain 2"/>
    <property type="match status" value="1"/>
</dbReference>
<dbReference type="HAMAP" id="MF_01321">
    <property type="entry name" value="RNApol_bact_RpoB"/>
    <property type="match status" value="1"/>
</dbReference>
<dbReference type="InterPro" id="IPR019462">
    <property type="entry name" value="DNA-dir_RNA_pol_bsu_external_1"/>
</dbReference>
<dbReference type="InterPro" id="IPR015712">
    <property type="entry name" value="DNA-dir_RNA_pol_su2"/>
</dbReference>
<dbReference type="InterPro" id="IPR007120">
    <property type="entry name" value="DNA-dir_RNAP_su2_dom"/>
</dbReference>
<dbReference type="InterPro" id="IPR037033">
    <property type="entry name" value="DNA-dir_RNAP_su2_hyb_sf"/>
</dbReference>
<dbReference type="InterPro" id="IPR010243">
    <property type="entry name" value="RNA_pol_bsu_bac"/>
</dbReference>
<dbReference type="InterPro" id="IPR007121">
    <property type="entry name" value="RNA_pol_bsu_CS"/>
</dbReference>
<dbReference type="InterPro" id="IPR007644">
    <property type="entry name" value="RNA_pol_bsu_protrusion"/>
</dbReference>
<dbReference type="InterPro" id="IPR007642">
    <property type="entry name" value="RNA_pol_Rpb2_2"/>
</dbReference>
<dbReference type="InterPro" id="IPR037034">
    <property type="entry name" value="RNA_pol_Rpb2_2_sf"/>
</dbReference>
<dbReference type="InterPro" id="IPR007645">
    <property type="entry name" value="RNA_pol_Rpb2_3"/>
</dbReference>
<dbReference type="InterPro" id="IPR007641">
    <property type="entry name" value="RNA_pol_Rpb2_7"/>
</dbReference>
<dbReference type="InterPro" id="IPR014724">
    <property type="entry name" value="RNA_pol_RPB2_OB-fold"/>
</dbReference>
<dbReference type="NCBIfam" id="NF001616">
    <property type="entry name" value="PRK00405.1"/>
    <property type="match status" value="1"/>
</dbReference>
<dbReference type="NCBIfam" id="TIGR02013">
    <property type="entry name" value="rpoB"/>
    <property type="match status" value="1"/>
</dbReference>
<dbReference type="PANTHER" id="PTHR20856">
    <property type="entry name" value="DNA-DIRECTED RNA POLYMERASE I SUBUNIT 2"/>
    <property type="match status" value="1"/>
</dbReference>
<dbReference type="Pfam" id="PF04563">
    <property type="entry name" value="RNA_pol_Rpb2_1"/>
    <property type="match status" value="1"/>
</dbReference>
<dbReference type="Pfam" id="PF04561">
    <property type="entry name" value="RNA_pol_Rpb2_2"/>
    <property type="match status" value="2"/>
</dbReference>
<dbReference type="Pfam" id="PF04565">
    <property type="entry name" value="RNA_pol_Rpb2_3"/>
    <property type="match status" value="1"/>
</dbReference>
<dbReference type="Pfam" id="PF10385">
    <property type="entry name" value="RNA_pol_Rpb2_45"/>
    <property type="match status" value="1"/>
</dbReference>
<dbReference type="Pfam" id="PF00562">
    <property type="entry name" value="RNA_pol_Rpb2_6"/>
    <property type="match status" value="1"/>
</dbReference>
<dbReference type="Pfam" id="PF04560">
    <property type="entry name" value="RNA_pol_Rpb2_7"/>
    <property type="match status" value="1"/>
</dbReference>
<dbReference type="SUPFAM" id="SSF64484">
    <property type="entry name" value="beta and beta-prime subunits of DNA dependent RNA-polymerase"/>
    <property type="match status" value="1"/>
</dbReference>
<dbReference type="PROSITE" id="PS01166">
    <property type="entry name" value="RNA_POL_BETA"/>
    <property type="match status" value="1"/>
</dbReference>
<reference key="1">
    <citation type="submission" date="2007-05" db="EMBL/GenBank/DDBJ databases">
        <title>Complete sequence of chromosome of Staphylococcus aureus subsp. aureus JH9.</title>
        <authorList>
            <consortium name="US DOE Joint Genome Institute"/>
            <person name="Copeland A."/>
            <person name="Lucas S."/>
            <person name="Lapidus A."/>
            <person name="Barry K."/>
            <person name="Detter J.C."/>
            <person name="Glavina del Rio T."/>
            <person name="Hammon N."/>
            <person name="Israni S."/>
            <person name="Pitluck S."/>
            <person name="Chain P."/>
            <person name="Malfatti S."/>
            <person name="Shin M."/>
            <person name="Vergez L."/>
            <person name="Schmutz J."/>
            <person name="Larimer F."/>
            <person name="Land M."/>
            <person name="Hauser L."/>
            <person name="Kyrpides N."/>
            <person name="Kim E."/>
            <person name="Tomasz A."/>
            <person name="Richardson P."/>
        </authorList>
    </citation>
    <scope>NUCLEOTIDE SEQUENCE [LARGE SCALE GENOMIC DNA]</scope>
    <source>
        <strain>JH9</strain>
    </source>
</reference>
<organism>
    <name type="scientific">Staphylococcus aureus (strain JH9)</name>
    <dbReference type="NCBI Taxonomy" id="359786"/>
    <lineage>
        <taxon>Bacteria</taxon>
        <taxon>Bacillati</taxon>
        <taxon>Bacillota</taxon>
        <taxon>Bacilli</taxon>
        <taxon>Bacillales</taxon>
        <taxon>Staphylococcaceae</taxon>
        <taxon>Staphylococcus</taxon>
    </lineage>
</organism>
<evidence type="ECO:0000255" key="1">
    <source>
        <dbReference type="HAMAP-Rule" id="MF_01321"/>
    </source>
</evidence>
<proteinExistence type="inferred from homology"/>
<sequence>MAGQVVQYGRHRKRRNYARISEVLELPNLIEIQTKSYEWFLREGLIEMFRDISPIEDFTGNLSLEFVDYRLGEPKYDLEESKNRDATYAAPLRVKVRLIIKETGEVKEQEVFMGDFPLMTDTGTFVINGAERVIVSQLVRSPSVYFNEKIDKNGRENYDATIIPNRGAWLEYETDAKDVVYVRIDRTRKLPLTVLLRALGFSSDQEIVDLLGDNEYLRNTLEKDGTENTEQALLEIYERLRPGEPPTVENAKSLLYSRFFDPKRYDLASVGRYKTNKKLHLKHRLFNQKLAEPIVNTETGEIVVEEGTVLDRRKIDEIMDVLESNANSEVFELHGSVIDEPVEIQSIKVYVPNDDEGRTTTVIGNAFPDSEVKCITPADIIASMSYFFNLLSGIGYTDDIDHLGNRRLRSVGELLQNQFRIGLSRMERVVRERMSIQDTESITPQQLINIRPVIASIKEFFGSSQLSQFMYQSNPLSDLTHKRRLSALGPGGLTRERAQMEVRDVHYSHYGRMCPIETPEGPNIGLINSLSSYARVNEFGFIETPYRKVDLDTHAITDQIDYLTADEEDSYVVAQANSKLDENGRFMDDEVVCRFRGNNTVMAKEKMDYMDVSPKQVVSAATACIPFLENDDSNRALMGANMQRQAVPLMNPEAPFVGTGMEHVAARDSGAAITAKHRGRVEHVESNEILVRRLVEENGVEHEGELDRYPLAKFKRSNSGTCYNQRPIVAVGDVVEYNEILADGPSMELGEMALGRNVVVGFMTWDGYNYEDAVIMSERLVKDDVYTSIHIEEYESEARDTKLGPEEITRDIPNVSESALKNLDDRGIVYIGAEVKDGDILVGKVTPKGVTELTAEERLLHAIFGEKAREVRDTSLRVPHGAGGIVLDVKVFNREEGDDTLSPGVNQLVRVYIVQKRKIHVGDKMCGRHGNKGVISKIVPEEDMPYLPDGRPIDIMLNPLGVPSRMNIGQVLELHLGMAAKNLGIHVASPVFDGANDDDVWSTIEEAGMARDGKTVLYDGRTGEPFDNRISVGVMYMLKLAHMVDDKLHARSTGPYSLVTQQPLGGKAQFGGQRFGEMEVWALEAYGAAYTLQEILTYKSDDTVGRVKTYEAIVKGENISRPSVPESFRVLMKELQSLGLDVKVMDEQDNEIEMTDVDDDDVVERKVDLQQNDAPETQKEVTD</sequence>
<accession>A5IQ96</accession>
<keyword id="KW-0240">DNA-directed RNA polymerase</keyword>
<keyword id="KW-0548">Nucleotidyltransferase</keyword>
<keyword id="KW-0804">Transcription</keyword>
<keyword id="KW-0808">Transferase</keyword>
<protein>
    <recommendedName>
        <fullName evidence="1">DNA-directed RNA polymerase subunit beta</fullName>
        <shortName evidence="1">RNAP subunit beta</shortName>
        <ecNumber evidence="1">2.7.7.6</ecNumber>
    </recommendedName>
    <alternativeName>
        <fullName evidence="1">RNA polymerase subunit beta</fullName>
    </alternativeName>
    <alternativeName>
        <fullName evidence="1">Transcriptase subunit beta</fullName>
    </alternativeName>
</protein>
<name>RPOB_STAA9</name>
<gene>
    <name evidence="1" type="primary">rpoB</name>
    <name type="ordered locus">SaurJH9_0565</name>
</gene>